<sequence length="485" mass="53938">MLKEYNSLIFELSKEGKKAYTLPPLDVEEKPLEDMLPKEMLREKEVDLPEVSEVDVIRHYTLLSQKNYGVDIGFYPLGSCTMKYNPKINEDMASLPGFTELHPYQPEETVQGALKLMYELEKALCEITGMDRFSLHPAAGAHGELTGLMIIKAYHEHRNDKKRKKIIVPDSAHGTNPASAAVAGFDVIEIKSNKEGAIDLEALKAVLNDEVAGLMLTNPSTLGLFEENIVEIARLVHEAGGLLYYDGANLNAIMGISRPGDMGFDVVHLNLHKTFSTPHGGGGPGSGPVGVKKELADFLPVPTVEEKDGRYFLDYDRPLSIGKVRSFYGNFNVMIKAYSYILTMGAEGLKRASELAVLNANYLKEKLKGYYKVAVDKTCMHEFVLAGLAEKSGDVRTLDVAKRLIDYGFHPPTIYFPLIVEEALMIEPTETETKETLDAFAETLIKIAKEAKENPELLKEAPHNTPVRRLDEVLAARNPVIRWTK</sequence>
<comment type="function">
    <text evidence="1">The glycine cleavage system catalyzes the degradation of glycine. The P protein binds the alpha-amino group of glycine through its pyridoxal phosphate cofactor; CO(2) is released and the remaining methylamine moiety is then transferred to the lipoamide cofactor of the H protein.</text>
</comment>
<comment type="catalytic activity">
    <reaction evidence="1">
        <text>N(6)-[(R)-lipoyl]-L-lysyl-[glycine-cleavage complex H protein] + glycine + H(+) = N(6)-[(R)-S(8)-aminomethyldihydrolipoyl]-L-lysyl-[glycine-cleavage complex H protein] + CO2</text>
        <dbReference type="Rhea" id="RHEA:24304"/>
        <dbReference type="Rhea" id="RHEA-COMP:10494"/>
        <dbReference type="Rhea" id="RHEA-COMP:10495"/>
        <dbReference type="ChEBI" id="CHEBI:15378"/>
        <dbReference type="ChEBI" id="CHEBI:16526"/>
        <dbReference type="ChEBI" id="CHEBI:57305"/>
        <dbReference type="ChEBI" id="CHEBI:83099"/>
        <dbReference type="ChEBI" id="CHEBI:83143"/>
        <dbReference type="EC" id="1.4.4.2"/>
    </reaction>
</comment>
<comment type="cofactor">
    <cofactor evidence="1">
        <name>pyridoxal 5'-phosphate</name>
        <dbReference type="ChEBI" id="CHEBI:597326"/>
    </cofactor>
</comment>
<comment type="subunit">
    <text evidence="1">The glycine cleavage system is composed of four proteins: P, T, L and H. In this organism, the P 'protein' is a heterodimer of two subunits.</text>
</comment>
<comment type="similarity">
    <text evidence="1">Belongs to the GcvP family. C-terminal subunit subfamily.</text>
</comment>
<gene>
    <name evidence="1" type="primary">gcvPB</name>
    <name type="synonym">gcvP</name>
    <name type="ordered locus">TTE0293</name>
</gene>
<organism>
    <name type="scientific">Caldanaerobacter subterraneus subsp. tengcongensis (strain DSM 15242 / JCM 11007 / NBRC 100824 / MB4)</name>
    <name type="common">Thermoanaerobacter tengcongensis</name>
    <dbReference type="NCBI Taxonomy" id="273068"/>
    <lineage>
        <taxon>Bacteria</taxon>
        <taxon>Bacillati</taxon>
        <taxon>Bacillota</taxon>
        <taxon>Clostridia</taxon>
        <taxon>Thermoanaerobacterales</taxon>
        <taxon>Thermoanaerobacteraceae</taxon>
        <taxon>Caldanaerobacter</taxon>
    </lineage>
</organism>
<proteinExistence type="inferred from homology"/>
<keyword id="KW-0560">Oxidoreductase</keyword>
<keyword id="KW-0663">Pyridoxal phosphate</keyword>
<keyword id="KW-1185">Reference proteome</keyword>
<accession>Q8RCW2</accession>
<protein>
    <recommendedName>
        <fullName evidence="1">Probable glycine dehydrogenase (decarboxylating) subunit 2</fullName>
        <ecNumber evidence="1">1.4.4.2</ecNumber>
    </recommendedName>
    <alternativeName>
        <fullName evidence="1">Glycine cleavage system P-protein subunit 2</fullName>
    </alternativeName>
    <alternativeName>
        <fullName evidence="1">Glycine decarboxylase subunit 2</fullName>
    </alternativeName>
    <alternativeName>
        <fullName evidence="1">Glycine dehydrogenase (aminomethyl-transferring) subunit 2</fullName>
    </alternativeName>
</protein>
<feature type="chain" id="PRO_0000167022" description="Probable glycine dehydrogenase (decarboxylating) subunit 2">
    <location>
        <begin position="1"/>
        <end position="485"/>
    </location>
</feature>
<feature type="modified residue" description="N6-(pyridoxal phosphate)lysine" evidence="1">
    <location>
        <position position="273"/>
    </location>
</feature>
<dbReference type="EC" id="1.4.4.2" evidence="1"/>
<dbReference type="EMBL" id="AE008691">
    <property type="protein sequence ID" value="AAM23589.1"/>
    <property type="molecule type" value="Genomic_DNA"/>
</dbReference>
<dbReference type="RefSeq" id="WP_009610509.1">
    <property type="nucleotide sequence ID" value="NC_003869.1"/>
</dbReference>
<dbReference type="SMR" id="Q8RCW2"/>
<dbReference type="STRING" id="273068.TTE0293"/>
<dbReference type="KEGG" id="tte:TTE0293"/>
<dbReference type="eggNOG" id="COG1003">
    <property type="taxonomic scope" value="Bacteria"/>
</dbReference>
<dbReference type="HOGENOM" id="CLU_004620_5_0_9"/>
<dbReference type="OrthoDB" id="9801272at2"/>
<dbReference type="Proteomes" id="UP000000555">
    <property type="component" value="Chromosome"/>
</dbReference>
<dbReference type="GO" id="GO:0005829">
    <property type="term" value="C:cytosol"/>
    <property type="evidence" value="ECO:0007669"/>
    <property type="project" value="TreeGrafter"/>
</dbReference>
<dbReference type="GO" id="GO:0005960">
    <property type="term" value="C:glycine cleavage complex"/>
    <property type="evidence" value="ECO:0007669"/>
    <property type="project" value="TreeGrafter"/>
</dbReference>
<dbReference type="GO" id="GO:0016594">
    <property type="term" value="F:glycine binding"/>
    <property type="evidence" value="ECO:0007669"/>
    <property type="project" value="TreeGrafter"/>
</dbReference>
<dbReference type="GO" id="GO:0004375">
    <property type="term" value="F:glycine dehydrogenase (decarboxylating) activity"/>
    <property type="evidence" value="ECO:0007669"/>
    <property type="project" value="UniProtKB-EC"/>
</dbReference>
<dbReference type="GO" id="GO:0030170">
    <property type="term" value="F:pyridoxal phosphate binding"/>
    <property type="evidence" value="ECO:0007669"/>
    <property type="project" value="TreeGrafter"/>
</dbReference>
<dbReference type="GO" id="GO:0019464">
    <property type="term" value="P:glycine decarboxylation via glycine cleavage system"/>
    <property type="evidence" value="ECO:0007669"/>
    <property type="project" value="UniProtKB-UniRule"/>
</dbReference>
<dbReference type="CDD" id="cd00613">
    <property type="entry name" value="GDC-P"/>
    <property type="match status" value="1"/>
</dbReference>
<dbReference type="FunFam" id="3.40.640.10:FF:000034">
    <property type="entry name" value="Probable glycine dehydrogenase (decarboxylating) subunit 2"/>
    <property type="match status" value="1"/>
</dbReference>
<dbReference type="FunFam" id="3.90.1150.10:FF:000014">
    <property type="entry name" value="Probable glycine dehydrogenase (decarboxylating) subunit 2"/>
    <property type="match status" value="1"/>
</dbReference>
<dbReference type="Gene3D" id="6.20.440.10">
    <property type="match status" value="1"/>
</dbReference>
<dbReference type="Gene3D" id="3.90.1150.10">
    <property type="entry name" value="Aspartate Aminotransferase, domain 1"/>
    <property type="match status" value="1"/>
</dbReference>
<dbReference type="Gene3D" id="3.40.640.10">
    <property type="entry name" value="Type I PLP-dependent aspartate aminotransferase-like (Major domain)"/>
    <property type="match status" value="1"/>
</dbReference>
<dbReference type="HAMAP" id="MF_00713">
    <property type="entry name" value="GcvPB"/>
    <property type="match status" value="1"/>
</dbReference>
<dbReference type="InterPro" id="IPR023012">
    <property type="entry name" value="GcvPB"/>
</dbReference>
<dbReference type="InterPro" id="IPR049316">
    <property type="entry name" value="GDC-P_C"/>
</dbReference>
<dbReference type="InterPro" id="IPR049315">
    <property type="entry name" value="GDC-P_N"/>
</dbReference>
<dbReference type="InterPro" id="IPR020581">
    <property type="entry name" value="GDC_P"/>
</dbReference>
<dbReference type="InterPro" id="IPR015424">
    <property type="entry name" value="PyrdxlP-dep_Trfase"/>
</dbReference>
<dbReference type="InterPro" id="IPR015421">
    <property type="entry name" value="PyrdxlP-dep_Trfase_major"/>
</dbReference>
<dbReference type="InterPro" id="IPR015422">
    <property type="entry name" value="PyrdxlP-dep_Trfase_small"/>
</dbReference>
<dbReference type="NCBIfam" id="NF003346">
    <property type="entry name" value="PRK04366.1"/>
    <property type="match status" value="1"/>
</dbReference>
<dbReference type="PANTHER" id="PTHR11773:SF1">
    <property type="entry name" value="GLYCINE DEHYDROGENASE (DECARBOXYLATING), MITOCHONDRIAL"/>
    <property type="match status" value="1"/>
</dbReference>
<dbReference type="PANTHER" id="PTHR11773">
    <property type="entry name" value="GLYCINE DEHYDROGENASE, DECARBOXYLATING"/>
    <property type="match status" value="1"/>
</dbReference>
<dbReference type="Pfam" id="PF21478">
    <property type="entry name" value="GcvP2_C"/>
    <property type="match status" value="1"/>
</dbReference>
<dbReference type="Pfam" id="PF02347">
    <property type="entry name" value="GDC-P"/>
    <property type="match status" value="1"/>
</dbReference>
<dbReference type="SUPFAM" id="SSF53383">
    <property type="entry name" value="PLP-dependent transferases"/>
    <property type="match status" value="1"/>
</dbReference>
<name>GCSPB_CALS4</name>
<reference key="1">
    <citation type="journal article" date="2002" name="Genome Res.">
        <title>A complete sequence of the T. tengcongensis genome.</title>
        <authorList>
            <person name="Bao Q."/>
            <person name="Tian Y."/>
            <person name="Li W."/>
            <person name="Xu Z."/>
            <person name="Xuan Z."/>
            <person name="Hu S."/>
            <person name="Dong W."/>
            <person name="Yang J."/>
            <person name="Chen Y."/>
            <person name="Xue Y."/>
            <person name="Xu Y."/>
            <person name="Lai X."/>
            <person name="Huang L."/>
            <person name="Dong X."/>
            <person name="Ma Y."/>
            <person name="Ling L."/>
            <person name="Tan H."/>
            <person name="Chen R."/>
            <person name="Wang J."/>
            <person name="Yu J."/>
            <person name="Yang H."/>
        </authorList>
    </citation>
    <scope>NUCLEOTIDE SEQUENCE [LARGE SCALE GENOMIC DNA]</scope>
    <source>
        <strain>DSM 15242 / JCM 11007 / NBRC 100824 / MB4</strain>
    </source>
</reference>
<evidence type="ECO:0000255" key="1">
    <source>
        <dbReference type="HAMAP-Rule" id="MF_00713"/>
    </source>
</evidence>